<sequence length="709" mass="79750">MAADESSADTLRLQFKAMQELQHRRLQKQMEKKREKELSCQSKADNQEGFMVIPDGLSLLDTEEQNLKNIFEKRVLEDEIQHLRSELRETVDENGRLYKLLKERDFEIKHLKKKIEEDRFAFTGASGMAGDLVATKIVELSKKNRGLMAESESAKVRIKQLTNRIQELEHQLQMASAKPPSKGATDAGAKPLKTQTGDRALLETPEVKALQDRLAATNLKMSDLRNQIQSAKQELRVAQKVLANEVGEDVNIQQLLASPGTWRGRAQQILVLQSRVRDLEKQLGQRQNKPAGSSSSEVPLSSDSRKMTAQEKNLLRIRSLERDKQESWEKLASERDTLQTELEELRKKFEGMRSRNKVLSSEVKTLRSQMTTLVEKGRHDDELIDALMDQLKQLQDILSSLSVQEESRRTSQQHLDQKVNSEAQRSSSLVAQLRAMVADREAKVRQLELEIGQLSVQYLHGKGGGEGASPADARFPEDQTPITNSPASAGDHVGRLGSSRSVTSLGHTLVESALTRPSLPSPHGTSPRFSDSPEQKGWQAQAAEMKALWQAAEVERDRLNEFVTVLQKRVEESSSKLLEAERRLQEERQRAVLLEQHLEKMRLEPSRASVSQKTKNKPGPPAANTKPNSAGSAKKDSSSTQLCDMPMESQIQELNARLAIQMEENGILRDALGSALRGKEEDFRMYHQTLGQVKGVFLQALRQQKANKQ</sequence>
<name>CCD13_MOUSE</name>
<evidence type="ECO:0000250" key="1">
    <source>
        <dbReference type="UniProtKB" id="Q8IYE1"/>
    </source>
</evidence>
<evidence type="ECO:0000255" key="2"/>
<evidence type="ECO:0000256" key="3">
    <source>
        <dbReference type="SAM" id="MobiDB-lite"/>
    </source>
</evidence>
<evidence type="ECO:0000305" key="4"/>
<evidence type="ECO:0000312" key="5">
    <source>
        <dbReference type="MGI" id="MGI:1920144"/>
    </source>
</evidence>
<evidence type="ECO:0007744" key="6">
    <source>
    </source>
</evidence>
<feature type="chain" id="PRO_0000431958" description="Coiled-coil domain-containing protein 13">
    <location>
        <begin position="1"/>
        <end position="709"/>
    </location>
</feature>
<feature type="region of interest" description="Disordered" evidence="3">
    <location>
        <begin position="281"/>
        <end position="312"/>
    </location>
</feature>
<feature type="region of interest" description="Disordered" evidence="3">
    <location>
        <begin position="462"/>
        <end position="499"/>
    </location>
</feature>
<feature type="region of interest" description="Disordered" evidence="3">
    <location>
        <begin position="512"/>
        <end position="542"/>
    </location>
</feature>
<feature type="region of interest" description="Disordered" evidence="3">
    <location>
        <begin position="600"/>
        <end position="641"/>
    </location>
</feature>
<feature type="coiled-coil region" evidence="2">
    <location>
        <begin position="70"/>
        <end position="97"/>
    </location>
</feature>
<feature type="coiled-coil region" evidence="2">
    <location>
        <begin position="139"/>
        <end position="178"/>
    </location>
</feature>
<feature type="coiled-coil region" evidence="2">
    <location>
        <begin position="206"/>
        <end position="288"/>
    </location>
</feature>
<feature type="coiled-coil region" evidence="2">
    <location>
        <begin position="323"/>
        <end position="457"/>
    </location>
</feature>
<feature type="coiled-coil region" evidence="2">
    <location>
        <begin position="539"/>
        <end position="604"/>
    </location>
</feature>
<feature type="compositionally biased region" description="Low complexity" evidence="3">
    <location>
        <begin position="293"/>
        <end position="302"/>
    </location>
</feature>
<feature type="modified residue" description="Phosphoserine" evidence="6">
    <location>
        <position position="258"/>
    </location>
</feature>
<feature type="modified residue" description="Phosphoserine" evidence="6">
    <location>
        <position position="469"/>
    </location>
</feature>
<feature type="modified residue" description="Phosphoserine" evidence="6">
    <location>
        <position position="532"/>
    </location>
</feature>
<reference key="1">
    <citation type="journal article" date="2009" name="PLoS Biol.">
        <title>Lineage-specific biology revealed by a finished genome assembly of the mouse.</title>
        <authorList>
            <person name="Church D.M."/>
            <person name="Goodstadt L."/>
            <person name="Hillier L.W."/>
            <person name="Zody M.C."/>
            <person name="Goldstein S."/>
            <person name="She X."/>
            <person name="Bult C.J."/>
            <person name="Agarwala R."/>
            <person name="Cherry J.L."/>
            <person name="DiCuccio M."/>
            <person name="Hlavina W."/>
            <person name="Kapustin Y."/>
            <person name="Meric P."/>
            <person name="Maglott D."/>
            <person name="Birtle Z."/>
            <person name="Marques A.C."/>
            <person name="Graves T."/>
            <person name="Zhou S."/>
            <person name="Teague B."/>
            <person name="Potamousis K."/>
            <person name="Churas C."/>
            <person name="Place M."/>
            <person name="Herschleb J."/>
            <person name="Runnheim R."/>
            <person name="Forrest D."/>
            <person name="Amos-Landgraf J."/>
            <person name="Schwartz D.C."/>
            <person name="Cheng Z."/>
            <person name="Lindblad-Toh K."/>
            <person name="Eichler E.E."/>
            <person name="Ponting C.P."/>
        </authorList>
    </citation>
    <scope>NUCLEOTIDE SEQUENCE [LARGE SCALE GENOMIC DNA]</scope>
    <source>
        <strain>C57BL/6J</strain>
    </source>
</reference>
<reference key="2">
    <citation type="journal article" date="2010" name="Cell">
        <title>A tissue-specific atlas of mouse protein phosphorylation and expression.</title>
        <authorList>
            <person name="Huttlin E.L."/>
            <person name="Jedrychowski M.P."/>
            <person name="Elias J.E."/>
            <person name="Goswami T."/>
            <person name="Rad R."/>
            <person name="Beausoleil S.A."/>
            <person name="Villen J."/>
            <person name="Haas W."/>
            <person name="Sowa M.E."/>
            <person name="Gygi S.P."/>
        </authorList>
    </citation>
    <scope>PHOSPHORYLATION [LARGE SCALE ANALYSIS] AT SER-258; SER-469 AND SER-532</scope>
    <scope>IDENTIFICATION BY MASS SPECTROMETRY [LARGE SCALE ANALYSIS]</scope>
    <source>
        <tissue>Testis</tissue>
    </source>
</reference>
<keyword id="KW-0966">Cell projection</keyword>
<keyword id="KW-0970">Cilium biogenesis/degradation</keyword>
<keyword id="KW-0175">Coiled coil</keyword>
<keyword id="KW-0963">Cytoplasm</keyword>
<keyword id="KW-0206">Cytoskeleton</keyword>
<keyword id="KW-0597">Phosphoprotein</keyword>
<keyword id="KW-1185">Reference proteome</keyword>
<accession>D3YV10</accession>
<dbReference type="EMBL" id="AC165080">
    <property type="status" value="NOT_ANNOTATED_CDS"/>
    <property type="molecule type" value="Genomic_DNA"/>
</dbReference>
<dbReference type="CCDS" id="CCDS57717.1"/>
<dbReference type="RefSeq" id="NP_082660.1">
    <property type="nucleotide sequence ID" value="NM_028384.1"/>
</dbReference>
<dbReference type="RefSeq" id="XP_006511967.1">
    <property type="nucleotide sequence ID" value="XM_006511904.4"/>
</dbReference>
<dbReference type="RefSeq" id="XP_011241227.1">
    <property type="nucleotide sequence ID" value="XM_011242925.3"/>
</dbReference>
<dbReference type="SMR" id="D3YV10"/>
<dbReference type="FunCoup" id="D3YV10">
    <property type="interactions" value="280"/>
</dbReference>
<dbReference type="IntAct" id="D3YV10">
    <property type="interactions" value="1"/>
</dbReference>
<dbReference type="STRING" id="10090.ENSMUSP00000114787"/>
<dbReference type="iPTMnet" id="D3YV10"/>
<dbReference type="PhosphoSitePlus" id="D3YV10"/>
<dbReference type="SwissPalm" id="D3YV10"/>
<dbReference type="PaxDb" id="10090-ENSMUSP00000114787"/>
<dbReference type="PeptideAtlas" id="D3YV10"/>
<dbReference type="ProteomicsDB" id="265589"/>
<dbReference type="Ensembl" id="ENSMUST00000135986.9">
    <property type="protein sequence ID" value="ENSMUSP00000114787.3"/>
    <property type="gene ID" value="ENSMUSG00000079235.11"/>
</dbReference>
<dbReference type="GeneID" id="100502861"/>
<dbReference type="KEGG" id="mmu:100502861"/>
<dbReference type="UCSC" id="uc012hct.1">
    <property type="organism name" value="mouse"/>
</dbReference>
<dbReference type="AGR" id="MGI:1920144"/>
<dbReference type="CTD" id="152206"/>
<dbReference type="MGI" id="MGI:1920144">
    <property type="gene designation" value="Ccdc13"/>
</dbReference>
<dbReference type="VEuPathDB" id="HostDB:ENSMUSG00000079235"/>
<dbReference type="eggNOG" id="ENOG502QSV1">
    <property type="taxonomic scope" value="Eukaryota"/>
</dbReference>
<dbReference type="GeneTree" id="ENSGT00390000000596"/>
<dbReference type="HOGENOM" id="CLU_026686_0_0_1"/>
<dbReference type="InParanoid" id="D3YV10"/>
<dbReference type="OMA" id="VNINTMN"/>
<dbReference type="OrthoDB" id="10258312at2759"/>
<dbReference type="PhylomeDB" id="D3YV10"/>
<dbReference type="TreeFam" id="TF328506"/>
<dbReference type="BioGRID-ORCS" id="100502861">
    <property type="hits" value="0 hits in 76 CRISPR screens"/>
</dbReference>
<dbReference type="ChiTaRS" id="Ccdc13">
    <property type="organism name" value="mouse"/>
</dbReference>
<dbReference type="PRO" id="PR:D3YV10"/>
<dbReference type="Proteomes" id="UP000000589">
    <property type="component" value="Chromosome 9"/>
</dbReference>
<dbReference type="RNAct" id="D3YV10">
    <property type="molecule type" value="protein"/>
</dbReference>
<dbReference type="Bgee" id="ENSMUSG00000079235">
    <property type="expression patterns" value="Expressed in spermatid and 78 other cell types or tissues"/>
</dbReference>
<dbReference type="ExpressionAtlas" id="D3YV10">
    <property type="expression patterns" value="baseline and differential"/>
</dbReference>
<dbReference type="GO" id="GO:0042995">
    <property type="term" value="C:cell projection"/>
    <property type="evidence" value="ECO:0007669"/>
    <property type="project" value="UniProtKB-KW"/>
</dbReference>
<dbReference type="GO" id="GO:0034451">
    <property type="term" value="C:centriolar satellite"/>
    <property type="evidence" value="ECO:0007669"/>
    <property type="project" value="UniProtKB-SubCell"/>
</dbReference>
<dbReference type="GO" id="GO:0005737">
    <property type="term" value="C:cytoplasm"/>
    <property type="evidence" value="ECO:0007669"/>
    <property type="project" value="UniProtKB-KW"/>
</dbReference>
<dbReference type="GO" id="GO:0031122">
    <property type="term" value="P:cytoplasmic microtubule organization"/>
    <property type="evidence" value="ECO:0007669"/>
    <property type="project" value="Ensembl"/>
</dbReference>
<dbReference type="GO" id="GO:0006974">
    <property type="term" value="P:DNA damage response"/>
    <property type="evidence" value="ECO:0007669"/>
    <property type="project" value="Ensembl"/>
</dbReference>
<dbReference type="GO" id="GO:1905515">
    <property type="term" value="P:non-motile cilium assembly"/>
    <property type="evidence" value="ECO:0007669"/>
    <property type="project" value="Ensembl"/>
</dbReference>
<dbReference type="InterPro" id="IPR038929">
    <property type="entry name" value="CCDC13"/>
</dbReference>
<dbReference type="PANTHER" id="PTHR31935">
    <property type="entry name" value="COILED-COIL DOMAIN-CONTAINING PROTEIN 13"/>
    <property type="match status" value="1"/>
</dbReference>
<dbReference type="PANTHER" id="PTHR31935:SF1">
    <property type="entry name" value="COILED-COIL DOMAIN-CONTAINING PROTEIN 13"/>
    <property type="match status" value="1"/>
</dbReference>
<organism>
    <name type="scientific">Mus musculus</name>
    <name type="common">Mouse</name>
    <dbReference type="NCBI Taxonomy" id="10090"/>
    <lineage>
        <taxon>Eukaryota</taxon>
        <taxon>Metazoa</taxon>
        <taxon>Chordata</taxon>
        <taxon>Craniata</taxon>
        <taxon>Vertebrata</taxon>
        <taxon>Euteleostomi</taxon>
        <taxon>Mammalia</taxon>
        <taxon>Eutheria</taxon>
        <taxon>Euarchontoglires</taxon>
        <taxon>Glires</taxon>
        <taxon>Rodentia</taxon>
        <taxon>Myomorpha</taxon>
        <taxon>Muroidea</taxon>
        <taxon>Muridae</taxon>
        <taxon>Murinae</taxon>
        <taxon>Mus</taxon>
        <taxon>Mus</taxon>
    </lineage>
</organism>
<comment type="function">
    <text evidence="1">Required for primary cilia formation and promotes the localization of the ciliopathy protein BBS4 to both centriolar satellites and cilia.</text>
</comment>
<comment type="subunit">
    <text evidence="1">Interacts with PCM1, CEP290 and PCNT.</text>
</comment>
<comment type="subcellular location">
    <subcellularLocation>
        <location evidence="1">Cytoplasm</location>
        <location evidence="1">Cytoskeleton</location>
        <location evidence="1">Microtubule organizing center</location>
        <location evidence="1">Centrosome</location>
        <location evidence="1">Centriolar satellite</location>
    </subcellularLocation>
    <subcellularLocation>
        <location evidence="1">Cytoplasm</location>
        <location evidence="1">Cytoskeleton</location>
        <location evidence="1">Cilium basal body</location>
    </subcellularLocation>
</comment>
<gene>
    <name evidence="5" type="primary">Ccdc13</name>
</gene>
<protein>
    <recommendedName>
        <fullName evidence="4">Coiled-coil domain-containing protein 13</fullName>
    </recommendedName>
</protein>
<proteinExistence type="evidence at protein level"/>